<organism>
    <name type="scientific">Bacillus subtilis (strain 168)</name>
    <dbReference type="NCBI Taxonomy" id="224308"/>
    <lineage>
        <taxon>Bacteria</taxon>
        <taxon>Bacillati</taxon>
        <taxon>Bacillota</taxon>
        <taxon>Bacilli</taxon>
        <taxon>Bacillales</taxon>
        <taxon>Bacillaceae</taxon>
        <taxon>Bacillus</taxon>
    </lineage>
</organism>
<comment type="function">
    <text evidence="1">Negatively regulates transcription of bacterial ribonucleotide reductase nrd genes and operons by binding to NrdR-boxes.</text>
</comment>
<comment type="cofactor">
    <cofactor evidence="1">
        <name>Zn(2+)</name>
        <dbReference type="ChEBI" id="CHEBI:29105"/>
    </cofactor>
    <text evidence="1">Binds 1 zinc ion.</text>
</comment>
<comment type="disruption phenotype">
    <text evidence="2">Suppresses the synthetic lethality of a dnaA1-yabA deletion for growth on rich medium, increased levels of nucleotides in the cell, increased levels of DNA replication elongation.</text>
</comment>
<comment type="similarity">
    <text evidence="1">Belongs to the NrdR family.</text>
</comment>
<accession>Q45549</accession>
<keyword id="KW-0067">ATP-binding</keyword>
<keyword id="KW-0238">DNA-binding</keyword>
<keyword id="KW-0479">Metal-binding</keyword>
<keyword id="KW-0547">Nucleotide-binding</keyword>
<keyword id="KW-1185">Reference proteome</keyword>
<keyword id="KW-0678">Repressor</keyword>
<keyword id="KW-0804">Transcription</keyword>
<keyword id="KW-0805">Transcription regulation</keyword>
<keyword id="KW-0862">Zinc</keyword>
<keyword id="KW-0863">Zinc-finger</keyword>
<name>NRDR_BACSU</name>
<gene>
    <name evidence="1" type="primary">nrdR</name>
    <name type="synonym">ytcG</name>
    <name type="ordered locus">BSU29000</name>
</gene>
<reference key="1">
    <citation type="journal article" date="1997" name="Microbiology">
        <title>Sequencing and functional annotation of the Bacillus subtilis genes in the 200 kb rrnB-dnaB region.</title>
        <authorList>
            <person name="Lapidus A."/>
            <person name="Galleron N."/>
            <person name="Sorokin A."/>
            <person name="Ehrlich S.D."/>
        </authorList>
    </citation>
    <scope>NUCLEOTIDE SEQUENCE [GENOMIC DNA]</scope>
    <source>
        <strain>168</strain>
    </source>
</reference>
<reference key="2">
    <citation type="journal article" date="1997" name="Nature">
        <title>The complete genome sequence of the Gram-positive bacterium Bacillus subtilis.</title>
        <authorList>
            <person name="Kunst F."/>
            <person name="Ogasawara N."/>
            <person name="Moszer I."/>
            <person name="Albertini A.M."/>
            <person name="Alloni G."/>
            <person name="Azevedo V."/>
            <person name="Bertero M.G."/>
            <person name="Bessieres P."/>
            <person name="Bolotin A."/>
            <person name="Borchert S."/>
            <person name="Borriss R."/>
            <person name="Boursier L."/>
            <person name="Brans A."/>
            <person name="Braun M."/>
            <person name="Brignell S.C."/>
            <person name="Bron S."/>
            <person name="Brouillet S."/>
            <person name="Bruschi C.V."/>
            <person name="Caldwell B."/>
            <person name="Capuano V."/>
            <person name="Carter N.M."/>
            <person name="Choi S.-K."/>
            <person name="Codani J.-J."/>
            <person name="Connerton I.F."/>
            <person name="Cummings N.J."/>
            <person name="Daniel R.A."/>
            <person name="Denizot F."/>
            <person name="Devine K.M."/>
            <person name="Duesterhoeft A."/>
            <person name="Ehrlich S.D."/>
            <person name="Emmerson P.T."/>
            <person name="Entian K.-D."/>
            <person name="Errington J."/>
            <person name="Fabret C."/>
            <person name="Ferrari E."/>
            <person name="Foulger D."/>
            <person name="Fritz C."/>
            <person name="Fujita M."/>
            <person name="Fujita Y."/>
            <person name="Fuma S."/>
            <person name="Galizzi A."/>
            <person name="Galleron N."/>
            <person name="Ghim S.-Y."/>
            <person name="Glaser P."/>
            <person name="Goffeau A."/>
            <person name="Golightly E.J."/>
            <person name="Grandi G."/>
            <person name="Guiseppi G."/>
            <person name="Guy B.J."/>
            <person name="Haga K."/>
            <person name="Haiech J."/>
            <person name="Harwood C.R."/>
            <person name="Henaut A."/>
            <person name="Hilbert H."/>
            <person name="Holsappel S."/>
            <person name="Hosono S."/>
            <person name="Hullo M.-F."/>
            <person name="Itaya M."/>
            <person name="Jones L.-M."/>
            <person name="Joris B."/>
            <person name="Karamata D."/>
            <person name="Kasahara Y."/>
            <person name="Klaerr-Blanchard M."/>
            <person name="Klein C."/>
            <person name="Kobayashi Y."/>
            <person name="Koetter P."/>
            <person name="Koningstein G."/>
            <person name="Krogh S."/>
            <person name="Kumano M."/>
            <person name="Kurita K."/>
            <person name="Lapidus A."/>
            <person name="Lardinois S."/>
            <person name="Lauber J."/>
            <person name="Lazarevic V."/>
            <person name="Lee S.-M."/>
            <person name="Levine A."/>
            <person name="Liu H."/>
            <person name="Masuda S."/>
            <person name="Mauel C."/>
            <person name="Medigue C."/>
            <person name="Medina N."/>
            <person name="Mellado R.P."/>
            <person name="Mizuno M."/>
            <person name="Moestl D."/>
            <person name="Nakai S."/>
            <person name="Noback M."/>
            <person name="Noone D."/>
            <person name="O'Reilly M."/>
            <person name="Ogawa K."/>
            <person name="Ogiwara A."/>
            <person name="Oudega B."/>
            <person name="Park S.-H."/>
            <person name="Parro V."/>
            <person name="Pohl T.M."/>
            <person name="Portetelle D."/>
            <person name="Porwollik S."/>
            <person name="Prescott A.M."/>
            <person name="Presecan E."/>
            <person name="Pujic P."/>
            <person name="Purnelle B."/>
            <person name="Rapoport G."/>
            <person name="Rey M."/>
            <person name="Reynolds S."/>
            <person name="Rieger M."/>
            <person name="Rivolta C."/>
            <person name="Rocha E."/>
            <person name="Roche B."/>
            <person name="Rose M."/>
            <person name="Sadaie Y."/>
            <person name="Sato T."/>
            <person name="Scanlan E."/>
            <person name="Schleich S."/>
            <person name="Schroeter R."/>
            <person name="Scoffone F."/>
            <person name="Sekiguchi J."/>
            <person name="Sekowska A."/>
            <person name="Seror S.J."/>
            <person name="Serror P."/>
            <person name="Shin B.-S."/>
            <person name="Soldo B."/>
            <person name="Sorokin A."/>
            <person name="Tacconi E."/>
            <person name="Takagi T."/>
            <person name="Takahashi H."/>
            <person name="Takemaru K."/>
            <person name="Takeuchi M."/>
            <person name="Tamakoshi A."/>
            <person name="Tanaka T."/>
            <person name="Terpstra P."/>
            <person name="Tognoni A."/>
            <person name="Tosato V."/>
            <person name="Uchiyama S."/>
            <person name="Vandenbol M."/>
            <person name="Vannier F."/>
            <person name="Vassarotti A."/>
            <person name="Viari A."/>
            <person name="Wambutt R."/>
            <person name="Wedler E."/>
            <person name="Wedler H."/>
            <person name="Weitzenegger T."/>
            <person name="Winters P."/>
            <person name="Wipat A."/>
            <person name="Yamamoto H."/>
            <person name="Yamane K."/>
            <person name="Yasumoto K."/>
            <person name="Yata K."/>
            <person name="Yoshida K."/>
            <person name="Yoshikawa H.-F."/>
            <person name="Zumstein E."/>
            <person name="Yoshikawa H."/>
            <person name="Danchin A."/>
        </authorList>
    </citation>
    <scope>NUCLEOTIDE SEQUENCE [LARGE SCALE GENOMIC DNA]</scope>
    <source>
        <strain>168</strain>
    </source>
</reference>
<reference key="3">
    <citation type="journal article" date="1987" name="Proc. Natl. Acad. Sci. U.S.A.">
        <title>Nucleotide sequence of Bacillus subtilis dnaB: a gene essential for DNA replication initiation and membrane attachment.</title>
        <authorList>
            <person name="Hoshino T."/>
            <person name="McKenzie T."/>
            <person name="Schmidt S."/>
            <person name="Tanaka T."/>
            <person name="Sueoka N."/>
        </authorList>
    </citation>
    <scope>NUCLEOTIDE SEQUENCE [GENOMIC DNA] OF 60-152</scope>
    <source>
        <strain>168 / PY79</strain>
    </source>
</reference>
<reference key="4">
    <citation type="journal article" date="2022" name="Mol. Microbiol.">
        <title>Multiple mechanisms for overcoming lethal over-initiation of DNA replication.</title>
        <authorList>
            <person name="Anderson M.E."/>
            <person name="Smith J.L."/>
            <person name="Grossman A.D."/>
        </authorList>
    </citation>
    <scope>DISRUPTION PHENOTYPE</scope>
    <source>
        <strain>168 / JH642</strain>
    </source>
</reference>
<proteinExistence type="inferred from homology"/>
<evidence type="ECO:0000255" key="1">
    <source>
        <dbReference type="HAMAP-Rule" id="MF_00440"/>
    </source>
</evidence>
<evidence type="ECO:0000269" key="2">
    <source>
    </source>
</evidence>
<feature type="chain" id="PRO_0000182265" description="Transcriptional repressor NrdR">
    <location>
        <begin position="1"/>
        <end position="152"/>
    </location>
</feature>
<feature type="domain" description="ATP-cone" evidence="1">
    <location>
        <begin position="49"/>
        <end position="139"/>
    </location>
</feature>
<feature type="zinc finger region" evidence="1">
    <location>
        <begin position="3"/>
        <end position="34"/>
    </location>
</feature>
<sequence>MKCPSCQHNGTRVLDSRPVDDGKSIRRRRECESCHYRFTTFEKVEETPLIVVKKEGVREEFSREKMLRGLIKACEKRPVSLKTLEDMCFDIEKELRNQGCSEVKSELVGEMVMDRLAKIDEVAYVRFASVYRQFKDINVFIDELKDLIKKER</sequence>
<dbReference type="EMBL" id="AF008220">
    <property type="protein sequence ID" value="AAC00357.1"/>
    <property type="molecule type" value="Genomic_DNA"/>
</dbReference>
<dbReference type="EMBL" id="AL009126">
    <property type="protein sequence ID" value="CAB14860.1"/>
    <property type="molecule type" value="Genomic_DNA"/>
</dbReference>
<dbReference type="EMBL" id="M15183">
    <property type="protein sequence ID" value="AAA22403.1"/>
    <property type="molecule type" value="Genomic_DNA"/>
</dbReference>
<dbReference type="PIR" id="D69989">
    <property type="entry name" value="D69989"/>
</dbReference>
<dbReference type="RefSeq" id="NP_390778.1">
    <property type="nucleotide sequence ID" value="NC_000964.3"/>
</dbReference>
<dbReference type="RefSeq" id="WP_003223586.1">
    <property type="nucleotide sequence ID" value="NZ_OZ025638.1"/>
</dbReference>
<dbReference type="SMR" id="Q45549"/>
<dbReference type="FunCoup" id="Q45549">
    <property type="interactions" value="277"/>
</dbReference>
<dbReference type="STRING" id="224308.BSU29000"/>
<dbReference type="PaxDb" id="224308-BSU29000"/>
<dbReference type="EnsemblBacteria" id="CAB14860">
    <property type="protein sequence ID" value="CAB14860"/>
    <property type="gene ID" value="BSU_29000"/>
</dbReference>
<dbReference type="GeneID" id="76979350"/>
<dbReference type="GeneID" id="937402"/>
<dbReference type="KEGG" id="bsu:BSU29000"/>
<dbReference type="PATRIC" id="fig|224308.179.peg.3149"/>
<dbReference type="eggNOG" id="COG1327">
    <property type="taxonomic scope" value="Bacteria"/>
</dbReference>
<dbReference type="InParanoid" id="Q45549"/>
<dbReference type="OrthoDB" id="9807461at2"/>
<dbReference type="PhylomeDB" id="Q45549"/>
<dbReference type="BioCyc" id="BSUB:BSU29000-MONOMER"/>
<dbReference type="PRO" id="PR:Q45549"/>
<dbReference type="Proteomes" id="UP000001570">
    <property type="component" value="Chromosome"/>
</dbReference>
<dbReference type="GO" id="GO:0005524">
    <property type="term" value="F:ATP binding"/>
    <property type="evidence" value="ECO:0007669"/>
    <property type="project" value="UniProtKB-KW"/>
</dbReference>
<dbReference type="GO" id="GO:0003690">
    <property type="term" value="F:double-stranded DNA binding"/>
    <property type="evidence" value="ECO:0000318"/>
    <property type="project" value="GO_Central"/>
</dbReference>
<dbReference type="GO" id="GO:0008270">
    <property type="term" value="F:zinc ion binding"/>
    <property type="evidence" value="ECO:0007669"/>
    <property type="project" value="UniProtKB-UniRule"/>
</dbReference>
<dbReference type="GO" id="GO:0045892">
    <property type="term" value="P:negative regulation of DNA-templated transcription"/>
    <property type="evidence" value="ECO:0000318"/>
    <property type="project" value="GO_Central"/>
</dbReference>
<dbReference type="HAMAP" id="MF_00440">
    <property type="entry name" value="NrdR"/>
    <property type="match status" value="1"/>
</dbReference>
<dbReference type="InterPro" id="IPR005144">
    <property type="entry name" value="ATP-cone_dom"/>
</dbReference>
<dbReference type="InterPro" id="IPR055173">
    <property type="entry name" value="NrdR-like_N"/>
</dbReference>
<dbReference type="InterPro" id="IPR003796">
    <property type="entry name" value="RNR_NrdR-like"/>
</dbReference>
<dbReference type="NCBIfam" id="TIGR00244">
    <property type="entry name" value="transcriptional regulator NrdR"/>
    <property type="match status" value="1"/>
</dbReference>
<dbReference type="PANTHER" id="PTHR30455">
    <property type="entry name" value="TRANSCRIPTIONAL REPRESSOR NRDR"/>
    <property type="match status" value="1"/>
</dbReference>
<dbReference type="PANTHER" id="PTHR30455:SF2">
    <property type="entry name" value="TRANSCRIPTIONAL REPRESSOR NRDR"/>
    <property type="match status" value="1"/>
</dbReference>
<dbReference type="Pfam" id="PF03477">
    <property type="entry name" value="ATP-cone"/>
    <property type="match status" value="1"/>
</dbReference>
<dbReference type="Pfam" id="PF22811">
    <property type="entry name" value="Zn_ribbon_NrdR"/>
    <property type="match status" value="1"/>
</dbReference>
<dbReference type="PROSITE" id="PS51161">
    <property type="entry name" value="ATP_CONE"/>
    <property type="match status" value="1"/>
</dbReference>
<protein>
    <recommendedName>
        <fullName evidence="1">Transcriptional repressor NrdR</fullName>
    </recommendedName>
</protein>